<sequence length="253" mass="27635">MMPILVTLNKISVTFGSRRVLNDISLSLRPGKILTLLGPNGAGKSTLVRVVLGLIPPSSGSLVREPGLRIGYVPQKLHLDATLPLTVSRFMRLKPGVKKADILPALTRVQAAHLLDQPMQKLSGGENQRVLLARALLNRPQLLVLDEPTQGVDVNGQLALYDLIEQLRKELGCAVLMVSHDLHLVMAKTDEVLCLNQHICCSGAPEVISTHPEFIAMFGNRGAEQLAVYRHNHNHRHDLHGKIILKNSGSRGA</sequence>
<keyword id="KW-0067">ATP-binding</keyword>
<keyword id="KW-0997">Cell inner membrane</keyword>
<keyword id="KW-1003">Cell membrane</keyword>
<keyword id="KW-0406">Ion transport</keyword>
<keyword id="KW-0472">Membrane</keyword>
<keyword id="KW-0547">Nucleotide-binding</keyword>
<keyword id="KW-1278">Translocase</keyword>
<keyword id="KW-0813">Transport</keyword>
<keyword id="KW-0862">Zinc</keyword>
<keyword id="KW-0864">Zinc transport</keyword>
<name>ZNUC_YERPS</name>
<feature type="chain" id="PRO_0000281572" description="Zinc import ATP-binding protein ZnuC">
    <location>
        <begin position="1"/>
        <end position="253"/>
    </location>
</feature>
<feature type="domain" description="ABC transporter" evidence="1">
    <location>
        <begin position="6"/>
        <end position="227"/>
    </location>
</feature>
<feature type="binding site" evidence="1">
    <location>
        <begin position="38"/>
        <end position="45"/>
    </location>
    <ligand>
        <name>ATP</name>
        <dbReference type="ChEBI" id="CHEBI:30616"/>
    </ligand>
</feature>
<protein>
    <recommendedName>
        <fullName evidence="1">Zinc import ATP-binding protein ZnuC</fullName>
        <ecNumber evidence="1">7.2.2.20</ecNumber>
    </recommendedName>
</protein>
<comment type="function">
    <text evidence="1">Part of the ABC transporter complex ZnuABC involved in zinc import. Responsible for energy coupling to the transport system.</text>
</comment>
<comment type="catalytic activity">
    <reaction evidence="1">
        <text>Zn(2+)(out) + ATP(in) + H2O(in) = Zn(2+)(in) + ADP(in) + phosphate(in) + H(+)(in)</text>
        <dbReference type="Rhea" id="RHEA:29795"/>
        <dbReference type="ChEBI" id="CHEBI:15377"/>
        <dbReference type="ChEBI" id="CHEBI:15378"/>
        <dbReference type="ChEBI" id="CHEBI:29105"/>
        <dbReference type="ChEBI" id="CHEBI:30616"/>
        <dbReference type="ChEBI" id="CHEBI:43474"/>
        <dbReference type="ChEBI" id="CHEBI:456216"/>
        <dbReference type="EC" id="7.2.2.20"/>
    </reaction>
</comment>
<comment type="subunit">
    <text evidence="1">The complex is composed of two ATP-binding proteins (ZnuC), two transmembrane proteins (ZnuB) and a solute-binding protein (ZnuA).</text>
</comment>
<comment type="subcellular location">
    <subcellularLocation>
        <location evidence="1">Cell inner membrane</location>
        <topology evidence="1">Peripheral membrane protein</topology>
    </subcellularLocation>
</comment>
<comment type="similarity">
    <text evidence="1">Belongs to the ABC transporter superfamily. Zinc importer (TC 3.A.1.15.5) family.</text>
</comment>
<organism>
    <name type="scientific">Yersinia pseudotuberculosis serotype I (strain IP32953)</name>
    <dbReference type="NCBI Taxonomy" id="273123"/>
    <lineage>
        <taxon>Bacteria</taxon>
        <taxon>Pseudomonadati</taxon>
        <taxon>Pseudomonadota</taxon>
        <taxon>Gammaproteobacteria</taxon>
        <taxon>Enterobacterales</taxon>
        <taxon>Yersiniaceae</taxon>
        <taxon>Yersinia</taxon>
    </lineage>
</organism>
<dbReference type="EC" id="7.2.2.20" evidence="1"/>
<dbReference type="EMBL" id="BX936398">
    <property type="protein sequence ID" value="CAH21281.1"/>
    <property type="molecule type" value="Genomic_DNA"/>
</dbReference>
<dbReference type="SMR" id="Q66AT7"/>
<dbReference type="KEGG" id="yps:YPTB2043"/>
<dbReference type="Proteomes" id="UP000001011">
    <property type="component" value="Chromosome"/>
</dbReference>
<dbReference type="GO" id="GO:0005886">
    <property type="term" value="C:plasma membrane"/>
    <property type="evidence" value="ECO:0007669"/>
    <property type="project" value="UniProtKB-SubCell"/>
</dbReference>
<dbReference type="GO" id="GO:0015633">
    <property type="term" value="F:ABC-type zinc transporter activity"/>
    <property type="evidence" value="ECO:0007669"/>
    <property type="project" value="UniProtKB-EC"/>
</dbReference>
<dbReference type="GO" id="GO:0005524">
    <property type="term" value="F:ATP binding"/>
    <property type="evidence" value="ECO:0007669"/>
    <property type="project" value="UniProtKB-KW"/>
</dbReference>
<dbReference type="GO" id="GO:0016887">
    <property type="term" value="F:ATP hydrolysis activity"/>
    <property type="evidence" value="ECO:0007669"/>
    <property type="project" value="InterPro"/>
</dbReference>
<dbReference type="GO" id="GO:0010043">
    <property type="term" value="P:response to zinc ion"/>
    <property type="evidence" value="ECO:0007669"/>
    <property type="project" value="TreeGrafter"/>
</dbReference>
<dbReference type="CDD" id="cd03235">
    <property type="entry name" value="ABC_Metallic_Cations"/>
    <property type="match status" value="1"/>
</dbReference>
<dbReference type="FunFam" id="3.40.50.300:FF:000392">
    <property type="entry name" value="Zinc import ATP-binding protein ZnuC"/>
    <property type="match status" value="1"/>
</dbReference>
<dbReference type="Gene3D" id="3.40.50.300">
    <property type="entry name" value="P-loop containing nucleotide triphosphate hydrolases"/>
    <property type="match status" value="1"/>
</dbReference>
<dbReference type="InterPro" id="IPR003593">
    <property type="entry name" value="AAA+_ATPase"/>
</dbReference>
<dbReference type="InterPro" id="IPR003439">
    <property type="entry name" value="ABC_transporter-like_ATP-bd"/>
</dbReference>
<dbReference type="InterPro" id="IPR050153">
    <property type="entry name" value="Metal_Ion_Import_ABC"/>
</dbReference>
<dbReference type="InterPro" id="IPR027417">
    <property type="entry name" value="P-loop_NTPase"/>
</dbReference>
<dbReference type="NCBIfam" id="NF007090">
    <property type="entry name" value="PRK09544.1"/>
    <property type="match status" value="1"/>
</dbReference>
<dbReference type="PANTHER" id="PTHR42734">
    <property type="entry name" value="METAL TRANSPORT SYSTEM ATP-BINDING PROTEIN TM_0124-RELATED"/>
    <property type="match status" value="1"/>
</dbReference>
<dbReference type="PANTHER" id="PTHR42734:SF9">
    <property type="entry name" value="ZINC IMPORT ATP-BINDING PROTEIN ZNUC"/>
    <property type="match status" value="1"/>
</dbReference>
<dbReference type="Pfam" id="PF00005">
    <property type="entry name" value="ABC_tran"/>
    <property type="match status" value="1"/>
</dbReference>
<dbReference type="SMART" id="SM00382">
    <property type="entry name" value="AAA"/>
    <property type="match status" value="1"/>
</dbReference>
<dbReference type="SUPFAM" id="SSF52540">
    <property type="entry name" value="P-loop containing nucleoside triphosphate hydrolases"/>
    <property type="match status" value="1"/>
</dbReference>
<dbReference type="PROSITE" id="PS50893">
    <property type="entry name" value="ABC_TRANSPORTER_2"/>
    <property type="match status" value="1"/>
</dbReference>
<dbReference type="PROSITE" id="PS51298">
    <property type="entry name" value="ZNUC"/>
    <property type="match status" value="1"/>
</dbReference>
<reference key="1">
    <citation type="journal article" date="2004" name="Proc. Natl. Acad. Sci. U.S.A.">
        <title>Insights into the evolution of Yersinia pestis through whole-genome comparison with Yersinia pseudotuberculosis.</title>
        <authorList>
            <person name="Chain P.S.G."/>
            <person name="Carniel E."/>
            <person name="Larimer F.W."/>
            <person name="Lamerdin J."/>
            <person name="Stoutland P.O."/>
            <person name="Regala W.M."/>
            <person name="Georgescu A.M."/>
            <person name="Vergez L.M."/>
            <person name="Land M.L."/>
            <person name="Motin V.L."/>
            <person name="Brubaker R.R."/>
            <person name="Fowler J."/>
            <person name="Hinnebusch J."/>
            <person name="Marceau M."/>
            <person name="Medigue C."/>
            <person name="Simonet M."/>
            <person name="Chenal-Francisque V."/>
            <person name="Souza B."/>
            <person name="Dacheux D."/>
            <person name="Elliott J.M."/>
            <person name="Derbise A."/>
            <person name="Hauser L.J."/>
            <person name="Garcia E."/>
        </authorList>
    </citation>
    <scope>NUCLEOTIDE SEQUENCE [LARGE SCALE GENOMIC DNA]</scope>
    <source>
        <strain>IP32953</strain>
    </source>
</reference>
<gene>
    <name evidence="1" type="primary">znuC</name>
    <name type="ordered locus">YPTB2043</name>
</gene>
<accession>Q66AT7</accession>
<proteinExistence type="inferred from homology"/>
<evidence type="ECO:0000255" key="1">
    <source>
        <dbReference type="HAMAP-Rule" id="MF_01725"/>
    </source>
</evidence>